<accession>A8AQ34</accession>
<comment type="function">
    <text evidence="1">Required for the timely initiation of chromosomal replication via direct interactions with the DnaA initiator protein.</text>
</comment>
<comment type="subunit">
    <text evidence="1">Homotetramer; dimer of dimers.</text>
</comment>
<comment type="similarity">
    <text evidence="1">Belongs to the SIS family. DiaA subfamily.</text>
</comment>
<feature type="chain" id="PRO_1000065537" description="DnaA initiator-associating protein DiaA">
    <location>
        <begin position="1"/>
        <end position="196"/>
    </location>
</feature>
<feature type="domain" description="SIS" evidence="1">
    <location>
        <begin position="34"/>
        <end position="196"/>
    </location>
</feature>
<sequence>MLDRIKVCFTESIQTQIAAAEALPDAISRAAMTLVHSLLNGNKILCCGNGTSAANAQHFAASMINRFETERPSLPAIALNTDNVVLTAIANDRLHDEIYAKQVRALGHAGDVLLAISTRGNSRDIVKAVEAAVTRDMTIVALTGYDGGELAGLLGPQDVEIRIPSHHSARIQEMHMLTVNCLCDLIDNTLFPHQDD</sequence>
<protein>
    <recommendedName>
        <fullName evidence="1">DnaA initiator-associating protein DiaA</fullName>
    </recommendedName>
</protein>
<organism>
    <name type="scientific">Citrobacter koseri (strain ATCC BAA-895 / CDC 4225-83 / SGSC4696)</name>
    <dbReference type="NCBI Taxonomy" id="290338"/>
    <lineage>
        <taxon>Bacteria</taxon>
        <taxon>Pseudomonadati</taxon>
        <taxon>Pseudomonadota</taxon>
        <taxon>Gammaproteobacteria</taxon>
        <taxon>Enterobacterales</taxon>
        <taxon>Enterobacteriaceae</taxon>
        <taxon>Citrobacter</taxon>
    </lineage>
</organism>
<dbReference type="EMBL" id="CP000822">
    <property type="protein sequence ID" value="ABV15597.1"/>
    <property type="molecule type" value="Genomic_DNA"/>
</dbReference>
<dbReference type="RefSeq" id="WP_012135279.1">
    <property type="nucleotide sequence ID" value="NC_009792.1"/>
</dbReference>
<dbReference type="SMR" id="A8AQ34"/>
<dbReference type="STRING" id="290338.CKO_04543"/>
<dbReference type="GeneID" id="84235010"/>
<dbReference type="KEGG" id="cko:CKO_04543"/>
<dbReference type="HOGENOM" id="CLU_080999_3_1_6"/>
<dbReference type="OrthoDB" id="9810929at2"/>
<dbReference type="Proteomes" id="UP000008148">
    <property type="component" value="Chromosome"/>
</dbReference>
<dbReference type="GO" id="GO:0097367">
    <property type="term" value="F:carbohydrate derivative binding"/>
    <property type="evidence" value="ECO:0007669"/>
    <property type="project" value="InterPro"/>
</dbReference>
<dbReference type="GO" id="GO:1901135">
    <property type="term" value="P:carbohydrate derivative metabolic process"/>
    <property type="evidence" value="ECO:0007669"/>
    <property type="project" value="InterPro"/>
</dbReference>
<dbReference type="GO" id="GO:0006260">
    <property type="term" value="P:DNA replication"/>
    <property type="evidence" value="ECO:0007669"/>
    <property type="project" value="UniProtKB-UniRule"/>
</dbReference>
<dbReference type="CDD" id="cd05006">
    <property type="entry name" value="SIS_GmhA"/>
    <property type="match status" value="1"/>
</dbReference>
<dbReference type="FunFam" id="3.40.50.10490:FF:000006">
    <property type="entry name" value="DnaA initiator-associating protein DiaA"/>
    <property type="match status" value="1"/>
</dbReference>
<dbReference type="Gene3D" id="3.40.50.10490">
    <property type="entry name" value="Glucose-6-phosphate isomerase like protein, domain 1"/>
    <property type="match status" value="1"/>
</dbReference>
<dbReference type="HAMAP" id="MF_01157">
    <property type="entry name" value="SIS_DiaA"/>
    <property type="match status" value="1"/>
</dbReference>
<dbReference type="InterPro" id="IPR023070">
    <property type="entry name" value="DiaA"/>
</dbReference>
<dbReference type="InterPro" id="IPR035461">
    <property type="entry name" value="GmhA/DiaA"/>
</dbReference>
<dbReference type="InterPro" id="IPR001347">
    <property type="entry name" value="SIS_dom"/>
</dbReference>
<dbReference type="InterPro" id="IPR046348">
    <property type="entry name" value="SIS_dom_sf"/>
</dbReference>
<dbReference type="InterPro" id="IPR050099">
    <property type="entry name" value="SIS_GmhA/DiaA_subfam"/>
</dbReference>
<dbReference type="NCBIfam" id="NF008138">
    <property type="entry name" value="PRK10886.1"/>
    <property type="match status" value="1"/>
</dbReference>
<dbReference type="PANTHER" id="PTHR30390:SF6">
    <property type="entry name" value="DNAA INITIATOR-ASSOCIATING PROTEIN DIAA"/>
    <property type="match status" value="1"/>
</dbReference>
<dbReference type="PANTHER" id="PTHR30390">
    <property type="entry name" value="SEDOHEPTULOSE 7-PHOSPHATE ISOMERASE / DNAA INITIATOR-ASSOCIATING FACTOR FOR REPLICATION INITIATION"/>
    <property type="match status" value="1"/>
</dbReference>
<dbReference type="Pfam" id="PF13580">
    <property type="entry name" value="SIS_2"/>
    <property type="match status" value="1"/>
</dbReference>
<dbReference type="SUPFAM" id="SSF53697">
    <property type="entry name" value="SIS domain"/>
    <property type="match status" value="1"/>
</dbReference>
<dbReference type="PROSITE" id="PS51464">
    <property type="entry name" value="SIS"/>
    <property type="match status" value="1"/>
</dbReference>
<gene>
    <name evidence="1" type="primary">diaA</name>
    <name type="ordered locus">CKO_04543</name>
</gene>
<keyword id="KW-0235">DNA replication</keyword>
<keyword id="KW-1185">Reference proteome</keyword>
<evidence type="ECO:0000255" key="1">
    <source>
        <dbReference type="HAMAP-Rule" id="MF_01157"/>
    </source>
</evidence>
<proteinExistence type="inferred from homology"/>
<reference key="1">
    <citation type="submission" date="2007-08" db="EMBL/GenBank/DDBJ databases">
        <authorList>
            <consortium name="The Citrobacter koseri Genome Sequencing Project"/>
            <person name="McClelland M."/>
            <person name="Sanderson E.K."/>
            <person name="Porwollik S."/>
            <person name="Spieth J."/>
            <person name="Clifton W.S."/>
            <person name="Latreille P."/>
            <person name="Courtney L."/>
            <person name="Wang C."/>
            <person name="Pepin K."/>
            <person name="Bhonagiri V."/>
            <person name="Nash W."/>
            <person name="Johnson M."/>
            <person name="Thiruvilangam P."/>
            <person name="Wilson R."/>
        </authorList>
    </citation>
    <scope>NUCLEOTIDE SEQUENCE [LARGE SCALE GENOMIC DNA]</scope>
    <source>
        <strain>ATCC BAA-895 / CDC 4225-83 / SGSC4696</strain>
    </source>
</reference>
<name>DIAA_CITK8</name>